<feature type="chain" id="PRO_0000358399" description="NAD(P)H-quinone oxidoreductase subunit K">
    <location>
        <begin position="1"/>
        <end position="247"/>
    </location>
</feature>
<feature type="region of interest" description="Disordered" evidence="2">
    <location>
        <begin position="218"/>
        <end position="247"/>
    </location>
</feature>
<feature type="binding site" evidence="1">
    <location>
        <position position="63"/>
    </location>
    <ligand>
        <name>[4Fe-4S] cluster</name>
        <dbReference type="ChEBI" id="CHEBI:49883"/>
    </ligand>
</feature>
<feature type="binding site" evidence="1">
    <location>
        <position position="64"/>
    </location>
    <ligand>
        <name>[4Fe-4S] cluster</name>
        <dbReference type="ChEBI" id="CHEBI:49883"/>
    </ligand>
</feature>
<feature type="binding site" evidence="1">
    <location>
        <position position="128"/>
    </location>
    <ligand>
        <name>[4Fe-4S] cluster</name>
        <dbReference type="ChEBI" id="CHEBI:49883"/>
    </ligand>
</feature>
<feature type="binding site" evidence="1">
    <location>
        <position position="159"/>
    </location>
    <ligand>
        <name>[4Fe-4S] cluster</name>
        <dbReference type="ChEBI" id="CHEBI:49883"/>
    </ligand>
</feature>
<evidence type="ECO:0000255" key="1">
    <source>
        <dbReference type="HAMAP-Rule" id="MF_01356"/>
    </source>
</evidence>
<evidence type="ECO:0000256" key="2">
    <source>
        <dbReference type="SAM" id="MobiDB-lite"/>
    </source>
</evidence>
<proteinExistence type="inferred from homology"/>
<dbReference type="EC" id="7.1.1.-" evidence="1"/>
<dbReference type="EMBL" id="CP000806">
    <property type="protein sequence ID" value="ACB51113.1"/>
    <property type="molecule type" value="Genomic_DNA"/>
</dbReference>
<dbReference type="RefSeq" id="WP_009545578.1">
    <property type="nucleotide sequence ID" value="NC_010546.1"/>
</dbReference>
<dbReference type="SMR" id="B1WZG1"/>
<dbReference type="STRING" id="43989.cce_1763"/>
<dbReference type="KEGG" id="cyt:cce_1763"/>
<dbReference type="eggNOG" id="COG0377">
    <property type="taxonomic scope" value="Bacteria"/>
</dbReference>
<dbReference type="HOGENOM" id="CLU_055737_2_1_3"/>
<dbReference type="OrthoDB" id="9786737at2"/>
<dbReference type="Proteomes" id="UP000001203">
    <property type="component" value="Chromosome circular"/>
</dbReference>
<dbReference type="GO" id="GO:0031676">
    <property type="term" value="C:plasma membrane-derived thylakoid membrane"/>
    <property type="evidence" value="ECO:0007669"/>
    <property type="project" value="UniProtKB-SubCell"/>
</dbReference>
<dbReference type="GO" id="GO:0045271">
    <property type="term" value="C:respiratory chain complex I"/>
    <property type="evidence" value="ECO:0007669"/>
    <property type="project" value="TreeGrafter"/>
</dbReference>
<dbReference type="GO" id="GO:0051539">
    <property type="term" value="F:4 iron, 4 sulfur cluster binding"/>
    <property type="evidence" value="ECO:0007669"/>
    <property type="project" value="UniProtKB-KW"/>
</dbReference>
<dbReference type="GO" id="GO:0005506">
    <property type="term" value="F:iron ion binding"/>
    <property type="evidence" value="ECO:0007669"/>
    <property type="project" value="UniProtKB-UniRule"/>
</dbReference>
<dbReference type="GO" id="GO:0008137">
    <property type="term" value="F:NADH dehydrogenase (ubiquinone) activity"/>
    <property type="evidence" value="ECO:0007669"/>
    <property type="project" value="InterPro"/>
</dbReference>
<dbReference type="GO" id="GO:0048038">
    <property type="term" value="F:quinone binding"/>
    <property type="evidence" value="ECO:0007669"/>
    <property type="project" value="UniProtKB-KW"/>
</dbReference>
<dbReference type="GO" id="GO:0009060">
    <property type="term" value="P:aerobic respiration"/>
    <property type="evidence" value="ECO:0007669"/>
    <property type="project" value="TreeGrafter"/>
</dbReference>
<dbReference type="GO" id="GO:0015990">
    <property type="term" value="P:electron transport coupled proton transport"/>
    <property type="evidence" value="ECO:0007669"/>
    <property type="project" value="TreeGrafter"/>
</dbReference>
<dbReference type="GO" id="GO:0019684">
    <property type="term" value="P:photosynthesis, light reaction"/>
    <property type="evidence" value="ECO:0007669"/>
    <property type="project" value="UniProtKB-UniRule"/>
</dbReference>
<dbReference type="FunFam" id="3.40.50.12280:FF:000003">
    <property type="entry name" value="NAD(P)H-quinone oxidoreductase subunit K, chloroplastic"/>
    <property type="match status" value="1"/>
</dbReference>
<dbReference type="Gene3D" id="3.40.50.12280">
    <property type="match status" value="1"/>
</dbReference>
<dbReference type="HAMAP" id="MF_01356">
    <property type="entry name" value="NDH1_NuoB"/>
    <property type="match status" value="1"/>
</dbReference>
<dbReference type="InterPro" id="IPR006137">
    <property type="entry name" value="NADH_UbQ_OxRdtase-like_20kDa"/>
</dbReference>
<dbReference type="InterPro" id="IPR006138">
    <property type="entry name" value="NADH_UQ_OxRdtase_20Kd_su"/>
</dbReference>
<dbReference type="NCBIfam" id="TIGR01957">
    <property type="entry name" value="nuoB_fam"/>
    <property type="match status" value="1"/>
</dbReference>
<dbReference type="NCBIfam" id="NF005012">
    <property type="entry name" value="PRK06411.1"/>
    <property type="match status" value="1"/>
</dbReference>
<dbReference type="PANTHER" id="PTHR11995">
    <property type="entry name" value="NADH DEHYDROGENASE"/>
    <property type="match status" value="1"/>
</dbReference>
<dbReference type="PANTHER" id="PTHR11995:SF14">
    <property type="entry name" value="NADH DEHYDROGENASE [UBIQUINONE] IRON-SULFUR PROTEIN 7, MITOCHONDRIAL"/>
    <property type="match status" value="1"/>
</dbReference>
<dbReference type="Pfam" id="PF01058">
    <property type="entry name" value="Oxidored_q6"/>
    <property type="match status" value="1"/>
</dbReference>
<dbReference type="SUPFAM" id="SSF56770">
    <property type="entry name" value="HydA/Nqo6-like"/>
    <property type="match status" value="1"/>
</dbReference>
<dbReference type="PROSITE" id="PS01150">
    <property type="entry name" value="COMPLEX1_20K"/>
    <property type="match status" value="1"/>
</dbReference>
<gene>
    <name evidence="1" type="primary">ndhK</name>
    <name type="ordered locus">cce_1763</name>
</gene>
<organism>
    <name type="scientific">Crocosphaera subtropica (strain ATCC 51142 / BH68)</name>
    <name type="common">Cyanothece sp. (strain ATCC 51142)</name>
    <dbReference type="NCBI Taxonomy" id="43989"/>
    <lineage>
        <taxon>Bacteria</taxon>
        <taxon>Bacillati</taxon>
        <taxon>Cyanobacteriota</taxon>
        <taxon>Cyanophyceae</taxon>
        <taxon>Oscillatoriophycideae</taxon>
        <taxon>Chroococcales</taxon>
        <taxon>Aphanothecaceae</taxon>
        <taxon>Crocosphaera</taxon>
        <taxon>Crocosphaera subtropica</taxon>
    </lineage>
</organism>
<comment type="function">
    <text evidence="1">NDH-1 shuttles electrons from an unknown electron donor, via FMN and iron-sulfur (Fe-S) centers, to quinones in the respiratory and/or the photosynthetic chain. The immediate electron acceptor for the enzyme in this species is believed to be plastoquinone. Couples the redox reaction to proton translocation, and thus conserves the redox energy in a proton gradient. Cyanobacterial NDH-1 also plays a role in inorganic carbon-concentration.</text>
</comment>
<comment type="catalytic activity">
    <reaction evidence="1">
        <text>a plastoquinone + NADH + (n+1) H(+)(in) = a plastoquinol + NAD(+) + n H(+)(out)</text>
        <dbReference type="Rhea" id="RHEA:42608"/>
        <dbReference type="Rhea" id="RHEA-COMP:9561"/>
        <dbReference type="Rhea" id="RHEA-COMP:9562"/>
        <dbReference type="ChEBI" id="CHEBI:15378"/>
        <dbReference type="ChEBI" id="CHEBI:17757"/>
        <dbReference type="ChEBI" id="CHEBI:57540"/>
        <dbReference type="ChEBI" id="CHEBI:57945"/>
        <dbReference type="ChEBI" id="CHEBI:62192"/>
    </reaction>
</comment>
<comment type="catalytic activity">
    <reaction evidence="1">
        <text>a plastoquinone + NADPH + (n+1) H(+)(in) = a plastoquinol + NADP(+) + n H(+)(out)</text>
        <dbReference type="Rhea" id="RHEA:42612"/>
        <dbReference type="Rhea" id="RHEA-COMP:9561"/>
        <dbReference type="Rhea" id="RHEA-COMP:9562"/>
        <dbReference type="ChEBI" id="CHEBI:15378"/>
        <dbReference type="ChEBI" id="CHEBI:17757"/>
        <dbReference type="ChEBI" id="CHEBI:57783"/>
        <dbReference type="ChEBI" id="CHEBI:58349"/>
        <dbReference type="ChEBI" id="CHEBI:62192"/>
    </reaction>
</comment>
<comment type="cofactor">
    <cofactor evidence="1">
        <name>[4Fe-4S] cluster</name>
        <dbReference type="ChEBI" id="CHEBI:49883"/>
    </cofactor>
    <text evidence="1">Binds 1 [4Fe-4S] cluster.</text>
</comment>
<comment type="subunit">
    <text evidence="1">NDH-1 can be composed of about 15 different subunits; different subcomplexes with different compositions have been identified which probably have different functions.</text>
</comment>
<comment type="subcellular location">
    <subcellularLocation>
        <location evidence="1">Cellular thylakoid membrane</location>
        <topology evidence="1">Peripheral membrane protein</topology>
        <orientation evidence="1">Cytoplasmic side</orientation>
    </subcellularLocation>
</comment>
<comment type="similarity">
    <text evidence="1">Belongs to the complex I 20 kDa subunit family.</text>
</comment>
<protein>
    <recommendedName>
        <fullName evidence="1">NAD(P)H-quinone oxidoreductase subunit K</fullName>
        <ecNumber evidence="1">7.1.1.-</ecNumber>
    </recommendedName>
    <alternativeName>
        <fullName evidence="1">NAD(P)H dehydrogenase I subunit K</fullName>
    </alternativeName>
    <alternativeName>
        <fullName evidence="1">NDH-1 subunit K</fullName>
        <shortName evidence="1">NDH-K</shortName>
    </alternativeName>
</protein>
<sequence>MSPNPTSDLSAIEQLQKEKILNPAARGQVTQDLSENIILTTVDDLHNWARLSSLWPLLYGTACCFIEFAALIGSRFDFDRFGLVPRSSPRQADLIITAGTITMKMAPALVRLYEEMPDPKYVIAMGACTITGGMFSSDSTTAVRGVDKLIPVDVYIPGCPPRPEAIFDAIIKLRKKVSNETIQERSTVMEQTHRYYSTPHNMKAVSPILTGKYLATPTRQAPPKELTEAIGMEVPPALASQKQKEEA</sequence>
<name>NDHK_CROS5</name>
<reference key="1">
    <citation type="journal article" date="2008" name="Proc. Natl. Acad. Sci. U.S.A.">
        <title>The genome of Cyanothece 51142, a unicellular diazotrophic cyanobacterium important in the marine nitrogen cycle.</title>
        <authorList>
            <person name="Welsh E.A."/>
            <person name="Liberton M."/>
            <person name="Stoeckel J."/>
            <person name="Loh T."/>
            <person name="Elvitigala T."/>
            <person name="Wang C."/>
            <person name="Wollam A."/>
            <person name="Fulton R.S."/>
            <person name="Clifton S.W."/>
            <person name="Jacobs J.M."/>
            <person name="Aurora R."/>
            <person name="Ghosh B.K."/>
            <person name="Sherman L.A."/>
            <person name="Smith R.D."/>
            <person name="Wilson R.K."/>
            <person name="Pakrasi H.B."/>
        </authorList>
    </citation>
    <scope>NUCLEOTIDE SEQUENCE [LARGE SCALE GENOMIC DNA]</scope>
    <source>
        <strain>ATCC 51142 / BH68</strain>
    </source>
</reference>
<keyword id="KW-0004">4Fe-4S</keyword>
<keyword id="KW-0408">Iron</keyword>
<keyword id="KW-0411">Iron-sulfur</keyword>
<keyword id="KW-0472">Membrane</keyword>
<keyword id="KW-0479">Metal-binding</keyword>
<keyword id="KW-0520">NAD</keyword>
<keyword id="KW-0521">NADP</keyword>
<keyword id="KW-0618">Plastoquinone</keyword>
<keyword id="KW-0874">Quinone</keyword>
<keyword id="KW-1185">Reference proteome</keyword>
<keyword id="KW-0793">Thylakoid</keyword>
<keyword id="KW-1278">Translocase</keyword>
<keyword id="KW-0813">Transport</keyword>
<accession>B1WZG1</accession>